<organism>
    <name type="scientific">Arabidopsis thaliana</name>
    <name type="common">Mouse-ear cress</name>
    <dbReference type="NCBI Taxonomy" id="3702"/>
    <lineage>
        <taxon>Eukaryota</taxon>
        <taxon>Viridiplantae</taxon>
        <taxon>Streptophyta</taxon>
        <taxon>Embryophyta</taxon>
        <taxon>Tracheophyta</taxon>
        <taxon>Spermatophyta</taxon>
        <taxon>Magnoliopsida</taxon>
        <taxon>eudicotyledons</taxon>
        <taxon>Gunneridae</taxon>
        <taxon>Pentapetalae</taxon>
        <taxon>rosids</taxon>
        <taxon>malvids</taxon>
        <taxon>Brassicales</taxon>
        <taxon>Brassicaceae</taxon>
        <taxon>Camelineae</taxon>
        <taxon>Arabidopsis</taxon>
    </lineage>
</organism>
<accession>Q9MA98</accession>
<protein>
    <recommendedName>
        <fullName>DNA excision repair protein ERCC-1</fullName>
        <shortName>AtERCC1</shortName>
        <shortName>AtRAD10</shortName>
        <ecNumber>3.1.-.-</ecNumber>
    </recommendedName>
    <alternativeName>
        <fullName>Ultraviolet hypersensitive 7</fullName>
    </alternativeName>
</protein>
<proteinExistence type="evidence at transcript level"/>
<comment type="function">
    <text evidence="2 3">Seems to be involved in nucleotide excision repair (NER) of damaged DNA (dark repair mechanism). The UVH1/RAD1-ERCC1/RAD10 complex may act as an endonuclease making DNA incision 5' to the lesion site. In vitro, is implicated in double strand breaks (DSBs) repair and is required for homologous recombination in the presence of non-homologous overhangs. In vitro, is involved in chromosomal recombination between tandem repeats in both direct and inverted orientations. May mediate the induction of a DNA-damage sensitive cell-cycle checkpoint during the G2 phase.</text>
</comment>
<comment type="subunit">
    <text evidence="4">Heterodimer with UVH1/RAD1.</text>
</comment>
<comment type="subcellular location">
    <subcellularLocation>
        <location evidence="4">Nucleus</location>
    </subcellularLocation>
</comment>
<comment type="similarity">
    <text evidence="4">Belongs to the ERCC1/RAD10/SWI10 family.</text>
</comment>
<sequence>MANEDDDGEKSRSLHQQIARKPKTQIVIGVPSYQEVLESSQTKSTPPSLFKPSQSFSQAFAFVKSSDVYSPPPPSSAAASSSQPSGASQVPHSSSQTHQTDGASSSSTPVATGSVPSNTTQNRNAILVSHRQKGNPLLKHIRNVKWVFSDIIPDYVLGQNSCALYLSLRYHLLHPDYLYFRIRELQKNFKLSVVLCHVDVEDTVKPLLEVTKTALLHDCTLLCAWSMTECARYLETIKVYENKPADLIQGQMDTDYLSRLNHSLTSIRHVNKSDVVTLGSTFGSLAHIIDASMEDLARCPGIGERKVKRLYDTFHEPFKRATSSYPSVVEPPIPEAPVEKDVNSEEPVEEDEDFVEDSRKRKKKEPEPEKTVKTALSAVFARYSDRLSKKKEKQKEKDTTTASDAETHQN</sequence>
<evidence type="ECO:0000256" key="1">
    <source>
        <dbReference type="SAM" id="MobiDB-lite"/>
    </source>
</evidence>
<evidence type="ECO:0000269" key="2">
    <source>
    </source>
</evidence>
<evidence type="ECO:0000269" key="3">
    <source>
    </source>
</evidence>
<evidence type="ECO:0000305" key="4"/>
<reference key="1">
    <citation type="submission" date="2000-06" db="EMBL/GenBank/DDBJ databases">
        <title>A RAD10/ERCC1 homolog from Arabidopsis thaliana.</title>
        <authorList>
            <person name="Vonarx E.J."/>
            <person name="Anderson H.J."/>
            <person name="Kunz B.A."/>
        </authorList>
    </citation>
    <scope>NUCLEOTIDE SEQUENCE [MRNA]</scope>
</reference>
<reference key="2">
    <citation type="journal article" date="2000" name="Nature">
        <title>Sequence and analysis of chromosome 3 of the plant Arabidopsis thaliana.</title>
        <authorList>
            <person name="Salanoubat M."/>
            <person name="Lemcke K."/>
            <person name="Rieger M."/>
            <person name="Ansorge W."/>
            <person name="Unseld M."/>
            <person name="Fartmann B."/>
            <person name="Valle G."/>
            <person name="Bloecker H."/>
            <person name="Perez-Alonso M."/>
            <person name="Obermaier B."/>
            <person name="Delseny M."/>
            <person name="Boutry M."/>
            <person name="Grivell L.A."/>
            <person name="Mache R."/>
            <person name="Puigdomenech P."/>
            <person name="De Simone V."/>
            <person name="Choisne N."/>
            <person name="Artiguenave F."/>
            <person name="Robert C."/>
            <person name="Brottier P."/>
            <person name="Wincker P."/>
            <person name="Cattolico L."/>
            <person name="Weissenbach J."/>
            <person name="Saurin W."/>
            <person name="Quetier F."/>
            <person name="Schaefer M."/>
            <person name="Mueller-Auer S."/>
            <person name="Gabel C."/>
            <person name="Fuchs M."/>
            <person name="Benes V."/>
            <person name="Wurmbach E."/>
            <person name="Drzonek H."/>
            <person name="Erfle H."/>
            <person name="Jordan N."/>
            <person name="Bangert S."/>
            <person name="Wiedelmann R."/>
            <person name="Kranz H."/>
            <person name="Voss H."/>
            <person name="Holland R."/>
            <person name="Brandt P."/>
            <person name="Nyakatura G."/>
            <person name="Vezzi A."/>
            <person name="D'Angelo M."/>
            <person name="Pallavicini A."/>
            <person name="Toppo S."/>
            <person name="Simionati B."/>
            <person name="Conrad A."/>
            <person name="Hornischer K."/>
            <person name="Kauer G."/>
            <person name="Loehnert T.-H."/>
            <person name="Nordsiek G."/>
            <person name="Reichelt J."/>
            <person name="Scharfe M."/>
            <person name="Schoen O."/>
            <person name="Bargues M."/>
            <person name="Terol J."/>
            <person name="Climent J."/>
            <person name="Navarro P."/>
            <person name="Collado C."/>
            <person name="Perez-Perez A."/>
            <person name="Ottenwaelder B."/>
            <person name="Duchemin D."/>
            <person name="Cooke R."/>
            <person name="Laudie M."/>
            <person name="Berger-Llauro C."/>
            <person name="Purnelle B."/>
            <person name="Masuy D."/>
            <person name="de Haan M."/>
            <person name="Maarse A.C."/>
            <person name="Alcaraz J.-P."/>
            <person name="Cottet A."/>
            <person name="Casacuberta E."/>
            <person name="Monfort A."/>
            <person name="Argiriou A."/>
            <person name="Flores M."/>
            <person name="Liguori R."/>
            <person name="Vitale D."/>
            <person name="Mannhaupt G."/>
            <person name="Haase D."/>
            <person name="Schoof H."/>
            <person name="Rudd S."/>
            <person name="Zaccaria P."/>
            <person name="Mewes H.-W."/>
            <person name="Mayer K.F.X."/>
            <person name="Kaul S."/>
            <person name="Town C.D."/>
            <person name="Koo H.L."/>
            <person name="Tallon L.J."/>
            <person name="Jenkins J."/>
            <person name="Rooney T."/>
            <person name="Rizzo M."/>
            <person name="Walts A."/>
            <person name="Utterback T."/>
            <person name="Fujii C.Y."/>
            <person name="Shea T.P."/>
            <person name="Creasy T.H."/>
            <person name="Haas B."/>
            <person name="Maiti R."/>
            <person name="Wu D."/>
            <person name="Peterson J."/>
            <person name="Van Aken S."/>
            <person name="Pai G."/>
            <person name="Militscher J."/>
            <person name="Sellers P."/>
            <person name="Gill J.E."/>
            <person name="Feldblyum T.V."/>
            <person name="Preuss D."/>
            <person name="Lin X."/>
            <person name="Nierman W.C."/>
            <person name="Salzberg S.L."/>
            <person name="White O."/>
            <person name="Venter J.C."/>
            <person name="Fraser C.M."/>
            <person name="Kaneko T."/>
            <person name="Nakamura Y."/>
            <person name="Sato S."/>
            <person name="Kato T."/>
            <person name="Asamizu E."/>
            <person name="Sasamoto S."/>
            <person name="Kimura T."/>
            <person name="Idesawa K."/>
            <person name="Kawashima K."/>
            <person name="Kishida Y."/>
            <person name="Kiyokawa C."/>
            <person name="Kohara M."/>
            <person name="Matsumoto M."/>
            <person name="Matsuno A."/>
            <person name="Muraki A."/>
            <person name="Nakayama S."/>
            <person name="Nakazaki N."/>
            <person name="Shinpo S."/>
            <person name="Takeuchi C."/>
            <person name="Wada T."/>
            <person name="Watanabe A."/>
            <person name="Yamada M."/>
            <person name="Yasuda M."/>
            <person name="Tabata S."/>
        </authorList>
    </citation>
    <scope>NUCLEOTIDE SEQUENCE [LARGE SCALE GENOMIC DNA]</scope>
    <source>
        <strain>cv. Columbia</strain>
    </source>
</reference>
<reference key="3">
    <citation type="journal article" date="2017" name="Plant J.">
        <title>Araport11: a complete reannotation of the Arabidopsis thaliana reference genome.</title>
        <authorList>
            <person name="Cheng C.Y."/>
            <person name="Krishnakumar V."/>
            <person name="Chan A.P."/>
            <person name="Thibaud-Nissen F."/>
            <person name="Schobel S."/>
            <person name="Town C.D."/>
        </authorList>
    </citation>
    <scope>GENOME REANNOTATION</scope>
    <source>
        <strain>cv. Columbia</strain>
    </source>
</reference>
<reference key="4">
    <citation type="journal article" date="2003" name="Science">
        <title>Empirical analysis of transcriptional activity in the Arabidopsis genome.</title>
        <authorList>
            <person name="Yamada K."/>
            <person name="Lim J."/>
            <person name="Dale J.M."/>
            <person name="Chen H."/>
            <person name="Shinn P."/>
            <person name="Palm C.J."/>
            <person name="Southwick A.M."/>
            <person name="Wu H.C."/>
            <person name="Kim C.J."/>
            <person name="Nguyen M."/>
            <person name="Pham P.K."/>
            <person name="Cheuk R.F."/>
            <person name="Karlin-Newmann G."/>
            <person name="Liu S.X."/>
            <person name="Lam B."/>
            <person name="Sakano H."/>
            <person name="Wu T."/>
            <person name="Yu G."/>
            <person name="Miranda M."/>
            <person name="Quach H.L."/>
            <person name="Tripp M."/>
            <person name="Chang C.H."/>
            <person name="Lee J.M."/>
            <person name="Toriumi M.J."/>
            <person name="Chan M.M."/>
            <person name="Tang C.C."/>
            <person name="Onodera C.S."/>
            <person name="Deng J.M."/>
            <person name="Akiyama K."/>
            <person name="Ansari Y."/>
            <person name="Arakawa T."/>
            <person name="Banh J."/>
            <person name="Banno F."/>
            <person name="Bowser L."/>
            <person name="Brooks S.Y."/>
            <person name="Carninci P."/>
            <person name="Chao Q."/>
            <person name="Choy N."/>
            <person name="Enju A."/>
            <person name="Goldsmith A.D."/>
            <person name="Gurjal M."/>
            <person name="Hansen N.F."/>
            <person name="Hayashizaki Y."/>
            <person name="Johnson-Hopson C."/>
            <person name="Hsuan V.W."/>
            <person name="Iida K."/>
            <person name="Karnes M."/>
            <person name="Khan S."/>
            <person name="Koesema E."/>
            <person name="Ishida J."/>
            <person name="Jiang P.X."/>
            <person name="Jones T."/>
            <person name="Kawai J."/>
            <person name="Kamiya A."/>
            <person name="Meyers C."/>
            <person name="Nakajima M."/>
            <person name="Narusaka M."/>
            <person name="Seki M."/>
            <person name="Sakurai T."/>
            <person name="Satou M."/>
            <person name="Tamse R."/>
            <person name="Vaysberg M."/>
            <person name="Wallender E.K."/>
            <person name="Wong C."/>
            <person name="Yamamura Y."/>
            <person name="Yuan S."/>
            <person name="Shinozaki K."/>
            <person name="Davis R.W."/>
            <person name="Theologis A."/>
            <person name="Ecker J.R."/>
        </authorList>
    </citation>
    <scope>NUCLEOTIDE SEQUENCE [LARGE SCALE MRNA]</scope>
    <source>
        <strain>cv. Columbia</strain>
    </source>
</reference>
<reference key="5">
    <citation type="submission" date="2002-03" db="EMBL/GenBank/DDBJ databases">
        <title>Full-length cDNA from Arabidopsis thaliana.</title>
        <authorList>
            <person name="Brover V.V."/>
            <person name="Troukhan M.E."/>
            <person name="Alexandrov N.A."/>
            <person name="Lu Y.-P."/>
            <person name="Flavell R.B."/>
            <person name="Feldmann K.A."/>
        </authorList>
    </citation>
    <scope>NUCLEOTIDE SEQUENCE [LARGE SCALE MRNA]</scope>
</reference>
<reference key="6">
    <citation type="journal article" date="2003" name="J. Exp. Bot.">
        <title>Arabidopsis mutants sensitive to gamma radiation include the homologue of the human repair gene ERCC1.</title>
        <authorList>
            <person name="Hefner E."/>
            <person name="Preuss S.B."/>
            <person name="Britt A.B."/>
        </authorList>
    </citation>
    <scope>FUNCTION</scope>
</reference>
<reference key="7">
    <citation type="journal article" date="2004" name="Plant J.">
        <title>Roles of the AtErcc1 protein in recombination.</title>
        <authorList>
            <person name="Dubest S."/>
            <person name="Gallego M.E."/>
            <person name="White C.I."/>
        </authorList>
    </citation>
    <scope>FUNCTION</scope>
</reference>
<name>ERCC1_ARATH</name>
<feature type="chain" id="PRO_0000087005" description="DNA excision repair protein ERCC-1">
    <location>
        <begin position="1"/>
        <end position="410"/>
    </location>
</feature>
<feature type="region of interest" description="Disordered" evidence="1">
    <location>
        <begin position="1"/>
        <end position="28"/>
    </location>
</feature>
<feature type="region of interest" description="Disordered" evidence="1">
    <location>
        <begin position="66"/>
        <end position="121"/>
    </location>
</feature>
<feature type="region of interest" description="Disordered" evidence="1">
    <location>
        <begin position="322"/>
        <end position="410"/>
    </location>
</feature>
<feature type="compositionally biased region" description="Low complexity" evidence="1">
    <location>
        <begin position="76"/>
        <end position="91"/>
    </location>
</feature>
<feature type="compositionally biased region" description="Polar residues" evidence="1">
    <location>
        <begin position="92"/>
        <end position="121"/>
    </location>
</feature>
<feature type="compositionally biased region" description="Acidic residues" evidence="1">
    <location>
        <begin position="344"/>
        <end position="355"/>
    </location>
</feature>
<feature type="compositionally biased region" description="Basic and acidic residues" evidence="1">
    <location>
        <begin position="356"/>
        <end position="372"/>
    </location>
</feature>
<feature type="compositionally biased region" description="Basic and acidic residues" evidence="1">
    <location>
        <begin position="383"/>
        <end position="410"/>
    </location>
</feature>
<dbReference type="EC" id="3.1.-.-"/>
<dbReference type="EMBL" id="AF276082">
    <property type="protein sequence ID" value="AAF99316.1"/>
    <property type="molecule type" value="mRNA"/>
</dbReference>
<dbReference type="EMBL" id="AC009177">
    <property type="protein sequence ID" value="AAF27027.1"/>
    <property type="molecule type" value="Genomic_DNA"/>
</dbReference>
<dbReference type="EMBL" id="CP002686">
    <property type="protein sequence ID" value="AEE74205.1"/>
    <property type="molecule type" value="Genomic_DNA"/>
</dbReference>
<dbReference type="EMBL" id="AY050335">
    <property type="protein sequence ID" value="AAK91352.1"/>
    <property type="molecule type" value="mRNA"/>
</dbReference>
<dbReference type="EMBL" id="AY116935">
    <property type="protein sequence ID" value="AAM51569.1"/>
    <property type="molecule type" value="mRNA"/>
</dbReference>
<dbReference type="EMBL" id="AY088915">
    <property type="protein sequence ID" value="AAM67221.1"/>
    <property type="molecule type" value="mRNA"/>
</dbReference>
<dbReference type="RefSeq" id="NP_187172.1">
    <property type="nucleotide sequence ID" value="NM_111394.5"/>
</dbReference>
<dbReference type="SMR" id="Q9MA98"/>
<dbReference type="BioGRID" id="5020">
    <property type="interactions" value="3"/>
</dbReference>
<dbReference type="FunCoup" id="Q9MA98">
    <property type="interactions" value="1947"/>
</dbReference>
<dbReference type="IntAct" id="Q9MA98">
    <property type="interactions" value="3"/>
</dbReference>
<dbReference type="STRING" id="3702.Q9MA98"/>
<dbReference type="iPTMnet" id="Q9MA98"/>
<dbReference type="PaxDb" id="3702-AT3G05210.1"/>
<dbReference type="ProteomicsDB" id="220620"/>
<dbReference type="EnsemblPlants" id="AT3G05210.1">
    <property type="protein sequence ID" value="AT3G05210.1"/>
    <property type="gene ID" value="AT3G05210"/>
</dbReference>
<dbReference type="GeneID" id="819685"/>
<dbReference type="Gramene" id="AT3G05210.1">
    <property type="protein sequence ID" value="AT3G05210.1"/>
    <property type="gene ID" value="AT3G05210"/>
</dbReference>
<dbReference type="KEGG" id="ath:AT3G05210"/>
<dbReference type="Araport" id="AT3G05210"/>
<dbReference type="TAIR" id="AT3G05210">
    <property type="gene designation" value="ERCC1"/>
</dbReference>
<dbReference type="eggNOG" id="KOG2841">
    <property type="taxonomic scope" value="Eukaryota"/>
</dbReference>
<dbReference type="HOGENOM" id="CLU_041616_4_0_1"/>
<dbReference type="InParanoid" id="Q9MA98"/>
<dbReference type="OrthoDB" id="10262814at2759"/>
<dbReference type="PhylomeDB" id="Q9MA98"/>
<dbReference type="PRO" id="PR:Q9MA98"/>
<dbReference type="Proteomes" id="UP000006548">
    <property type="component" value="Chromosome 3"/>
</dbReference>
<dbReference type="ExpressionAtlas" id="Q9MA98">
    <property type="expression patterns" value="baseline and differential"/>
</dbReference>
<dbReference type="GO" id="GO:0005634">
    <property type="term" value="C:nucleus"/>
    <property type="evidence" value="ECO:0007669"/>
    <property type="project" value="UniProtKB-SubCell"/>
</dbReference>
<dbReference type="GO" id="GO:0017108">
    <property type="term" value="F:5'-flap endonuclease activity"/>
    <property type="evidence" value="ECO:0000315"/>
    <property type="project" value="TAIR"/>
</dbReference>
<dbReference type="GO" id="GO:0003684">
    <property type="term" value="F:damaged DNA binding"/>
    <property type="evidence" value="ECO:0007669"/>
    <property type="project" value="InterPro"/>
</dbReference>
<dbReference type="GO" id="GO:0000724">
    <property type="term" value="P:double-strand break repair via homologous recombination"/>
    <property type="evidence" value="ECO:0000315"/>
    <property type="project" value="TAIR"/>
</dbReference>
<dbReference type="GO" id="GO:0010213">
    <property type="term" value="P:non-photoreactive DNA repair"/>
    <property type="evidence" value="ECO:0000315"/>
    <property type="project" value="TAIR"/>
</dbReference>
<dbReference type="GO" id="GO:0006294">
    <property type="term" value="P:nucleotide-excision repair, preincision complex assembly"/>
    <property type="evidence" value="ECO:0000315"/>
    <property type="project" value="TAIR"/>
</dbReference>
<dbReference type="GO" id="GO:0010332">
    <property type="term" value="P:response to gamma radiation"/>
    <property type="evidence" value="ECO:0000315"/>
    <property type="project" value="TAIR"/>
</dbReference>
<dbReference type="GO" id="GO:0010224">
    <property type="term" value="P:response to UV-B"/>
    <property type="evidence" value="ECO:0000315"/>
    <property type="project" value="TAIR"/>
</dbReference>
<dbReference type="CDD" id="cd22325">
    <property type="entry name" value="ERCC1_C-like"/>
    <property type="match status" value="1"/>
</dbReference>
<dbReference type="FunFam" id="1.10.150.20:FF:000017">
    <property type="entry name" value="DNA excision repair protein ERCC-1"/>
    <property type="match status" value="1"/>
</dbReference>
<dbReference type="FunFam" id="3.40.50.10130:FF:000001">
    <property type="entry name" value="DNA excision repair protein ERCC-1"/>
    <property type="match status" value="1"/>
</dbReference>
<dbReference type="Gene3D" id="3.40.50.10130">
    <property type="match status" value="1"/>
</dbReference>
<dbReference type="Gene3D" id="1.10.150.20">
    <property type="entry name" value="5' to 3' exonuclease, C-terminal subdomain"/>
    <property type="match status" value="1"/>
</dbReference>
<dbReference type="InterPro" id="IPR047260">
    <property type="entry name" value="ERCC1-like_central_dom"/>
</dbReference>
<dbReference type="InterPro" id="IPR004579">
    <property type="entry name" value="ERCC1/RAD10/SWI10"/>
</dbReference>
<dbReference type="InterPro" id="IPR011335">
    <property type="entry name" value="Restrct_endonuc-II-like"/>
</dbReference>
<dbReference type="InterPro" id="IPR010994">
    <property type="entry name" value="RuvA_2-like"/>
</dbReference>
<dbReference type="NCBIfam" id="TIGR00597">
    <property type="entry name" value="rad10"/>
    <property type="match status" value="1"/>
</dbReference>
<dbReference type="PANTHER" id="PTHR12749:SF0">
    <property type="entry name" value="DNA EXCISION REPAIR PROTEIN ERCC-1"/>
    <property type="match status" value="1"/>
</dbReference>
<dbReference type="PANTHER" id="PTHR12749">
    <property type="entry name" value="EXCISION REPAIR CROSS-COMPLEMENTING 1 ERCC1"/>
    <property type="match status" value="1"/>
</dbReference>
<dbReference type="Pfam" id="PF14520">
    <property type="entry name" value="HHH_5"/>
    <property type="match status" value="1"/>
</dbReference>
<dbReference type="Pfam" id="PF03834">
    <property type="entry name" value="Rad10"/>
    <property type="match status" value="1"/>
</dbReference>
<dbReference type="SUPFAM" id="SSF52980">
    <property type="entry name" value="Restriction endonuclease-like"/>
    <property type="match status" value="1"/>
</dbReference>
<dbReference type="SUPFAM" id="SSF47781">
    <property type="entry name" value="RuvA domain 2-like"/>
    <property type="match status" value="1"/>
</dbReference>
<gene>
    <name type="primary">ERCC1</name>
    <name type="synonym">RAD10</name>
    <name type="synonym">UVR7</name>
    <name type="ordered locus">At3g05210</name>
    <name type="ORF">T12H1.18</name>
</gene>
<keyword id="KW-0227">DNA damage</keyword>
<keyword id="KW-0228">DNA excision</keyword>
<keyword id="KW-0233">DNA recombination</keyword>
<keyword id="KW-0234">DNA repair</keyword>
<keyword id="KW-0238">DNA-binding</keyword>
<keyword id="KW-0255">Endonuclease</keyword>
<keyword id="KW-0378">Hydrolase</keyword>
<keyword id="KW-0540">Nuclease</keyword>
<keyword id="KW-0539">Nucleus</keyword>
<keyword id="KW-1185">Reference proteome</keyword>